<evidence type="ECO:0000255" key="1"/>
<evidence type="ECO:0000256" key="2">
    <source>
        <dbReference type="SAM" id="MobiDB-lite"/>
    </source>
</evidence>
<evidence type="ECO:0000269" key="3">
    <source>
    </source>
</evidence>
<evidence type="ECO:0000269" key="4">
    <source>
    </source>
</evidence>
<protein>
    <recommendedName>
        <fullName>Uncharacterized protein YPR063C</fullName>
    </recommendedName>
</protein>
<keyword id="KW-0256">Endoplasmic reticulum</keyword>
<keyword id="KW-0325">Glycoprotein</keyword>
<keyword id="KW-0472">Membrane</keyword>
<keyword id="KW-1185">Reference proteome</keyword>
<keyword id="KW-0812">Transmembrane</keyword>
<keyword id="KW-1133">Transmembrane helix</keyword>
<sequence length="140" mass="15441">MTLNNVARPDLCVSYKKIAPPKGLYSATPSISGVVNQSMPMAAIFLRNKFIAWFSLIQSVHYYLNTDEDIIVAYKENKAPSPMDQPPAIKLFMSLIGLCVCYMNLVFPQQIAQPSSSGSKGNTETTIETTTEVETETAKQ</sequence>
<comment type="subcellular location">
    <subcellularLocation>
        <location evidence="3">Endoplasmic reticulum membrane</location>
        <topology evidence="3">Single-pass membrane protein</topology>
    </subcellularLocation>
</comment>
<comment type="miscellaneous">
    <text evidence="4">Present with 2140 molecules/cell in log phase SD medium.</text>
</comment>
<organism>
    <name type="scientific">Saccharomyces cerevisiae (strain ATCC 204508 / S288c)</name>
    <name type="common">Baker's yeast</name>
    <dbReference type="NCBI Taxonomy" id="559292"/>
    <lineage>
        <taxon>Eukaryota</taxon>
        <taxon>Fungi</taxon>
        <taxon>Dikarya</taxon>
        <taxon>Ascomycota</taxon>
        <taxon>Saccharomycotina</taxon>
        <taxon>Saccharomycetes</taxon>
        <taxon>Saccharomycetales</taxon>
        <taxon>Saccharomycetaceae</taxon>
        <taxon>Saccharomyces</taxon>
    </lineage>
</organism>
<feature type="chain" id="PRO_0000257824" description="Uncharacterized protein YPR063C">
    <location>
        <begin position="1"/>
        <end position="140"/>
    </location>
</feature>
<feature type="transmembrane region" description="Helical" evidence="1">
    <location>
        <begin position="91"/>
        <end position="107"/>
    </location>
</feature>
<feature type="region of interest" description="Disordered" evidence="2">
    <location>
        <begin position="113"/>
        <end position="140"/>
    </location>
</feature>
<feature type="compositionally biased region" description="Polar residues" evidence="2">
    <location>
        <begin position="113"/>
        <end position="122"/>
    </location>
</feature>
<feature type="compositionally biased region" description="Acidic residues" evidence="2">
    <location>
        <begin position="131"/>
        <end position="140"/>
    </location>
</feature>
<feature type="glycosylation site" description="N-linked (GlcNAc...) asparagine" evidence="1">
    <location>
        <position position="36"/>
    </location>
</feature>
<dbReference type="EMBL" id="Z71255">
    <property type="protein sequence ID" value="CAA95007.1"/>
    <property type="molecule type" value="Genomic_DNA"/>
</dbReference>
<dbReference type="EMBL" id="Z49219">
    <property type="protein sequence ID" value="CAA89180.1"/>
    <property type="molecule type" value="Genomic_DNA"/>
</dbReference>
<dbReference type="EMBL" id="BK006949">
    <property type="protein sequence ID" value="DAA11484.1"/>
    <property type="molecule type" value="Genomic_DNA"/>
</dbReference>
<dbReference type="PIR" id="S54084">
    <property type="entry name" value="S54084"/>
</dbReference>
<dbReference type="RefSeq" id="NP_015388.1">
    <property type="nucleotide sequence ID" value="NM_001184160.1"/>
</dbReference>
<dbReference type="BioGRID" id="36236">
    <property type="interactions" value="74"/>
</dbReference>
<dbReference type="DIP" id="DIP-3893N"/>
<dbReference type="FunCoup" id="Q12160">
    <property type="interactions" value="51"/>
</dbReference>
<dbReference type="IntAct" id="Q12160">
    <property type="interactions" value="3"/>
</dbReference>
<dbReference type="STRING" id="4932.YPR063C"/>
<dbReference type="GlyGen" id="Q12160">
    <property type="glycosylation" value="2 sites"/>
</dbReference>
<dbReference type="iPTMnet" id="Q12160"/>
<dbReference type="PaxDb" id="4932-YPR063C"/>
<dbReference type="PeptideAtlas" id="Q12160"/>
<dbReference type="EnsemblFungi" id="YPR063C_mRNA">
    <property type="protein sequence ID" value="YPR063C"/>
    <property type="gene ID" value="YPR063C"/>
</dbReference>
<dbReference type="GeneID" id="856176"/>
<dbReference type="KEGG" id="sce:YPR063C"/>
<dbReference type="AGR" id="SGD:S000006267"/>
<dbReference type="SGD" id="S000006267">
    <property type="gene designation" value="YPR063C"/>
</dbReference>
<dbReference type="VEuPathDB" id="FungiDB:YPR063C"/>
<dbReference type="eggNOG" id="ENOG502S6JB">
    <property type="taxonomic scope" value="Eukaryota"/>
</dbReference>
<dbReference type="HOGENOM" id="CLU_129456_1_0_1"/>
<dbReference type="InParanoid" id="Q12160"/>
<dbReference type="OMA" id="RNKFIGW"/>
<dbReference type="OrthoDB" id="284718at2759"/>
<dbReference type="BioCyc" id="YEAST:G3O-34212-MONOMER"/>
<dbReference type="BioGRID-ORCS" id="856176">
    <property type="hits" value="2 hits in 10 CRISPR screens"/>
</dbReference>
<dbReference type="PRO" id="PR:Q12160"/>
<dbReference type="Proteomes" id="UP000002311">
    <property type="component" value="Chromosome XVI"/>
</dbReference>
<dbReference type="RNAct" id="Q12160">
    <property type="molecule type" value="protein"/>
</dbReference>
<dbReference type="GO" id="GO:0005783">
    <property type="term" value="C:endoplasmic reticulum"/>
    <property type="evidence" value="ECO:0007005"/>
    <property type="project" value="SGD"/>
</dbReference>
<dbReference type="GO" id="GO:0005789">
    <property type="term" value="C:endoplasmic reticulum membrane"/>
    <property type="evidence" value="ECO:0007669"/>
    <property type="project" value="UniProtKB-SubCell"/>
</dbReference>
<dbReference type="PANTHER" id="PTHR28038">
    <property type="entry name" value="ADL329WP"/>
    <property type="match status" value="1"/>
</dbReference>
<dbReference type="PANTHER" id="PTHR28038:SF1">
    <property type="entry name" value="ADL329WP"/>
    <property type="match status" value="1"/>
</dbReference>
<name>YP063_YEAST</name>
<proteinExistence type="evidence at protein level"/>
<gene>
    <name type="ordered locus">YPR063C</name>
</gene>
<reference key="1">
    <citation type="journal article" date="1997" name="Nature">
        <title>The nucleotide sequence of Saccharomyces cerevisiae chromosome XVI.</title>
        <authorList>
            <person name="Bussey H."/>
            <person name="Storms R.K."/>
            <person name="Ahmed A."/>
            <person name="Albermann K."/>
            <person name="Allen E."/>
            <person name="Ansorge W."/>
            <person name="Araujo R."/>
            <person name="Aparicio A."/>
            <person name="Barrell B.G."/>
            <person name="Badcock K."/>
            <person name="Benes V."/>
            <person name="Botstein D."/>
            <person name="Bowman S."/>
            <person name="Brueckner M."/>
            <person name="Carpenter J."/>
            <person name="Cherry J.M."/>
            <person name="Chung E."/>
            <person name="Churcher C.M."/>
            <person name="Coster F."/>
            <person name="Davis K."/>
            <person name="Davis R.W."/>
            <person name="Dietrich F.S."/>
            <person name="Delius H."/>
            <person name="DiPaolo T."/>
            <person name="Dubois E."/>
            <person name="Duesterhoeft A."/>
            <person name="Duncan M."/>
            <person name="Floeth M."/>
            <person name="Fortin N."/>
            <person name="Friesen J.D."/>
            <person name="Fritz C."/>
            <person name="Goffeau A."/>
            <person name="Hall J."/>
            <person name="Hebling U."/>
            <person name="Heumann K."/>
            <person name="Hilbert H."/>
            <person name="Hillier L.W."/>
            <person name="Hunicke-Smith S."/>
            <person name="Hyman R.W."/>
            <person name="Johnston M."/>
            <person name="Kalman S."/>
            <person name="Kleine K."/>
            <person name="Komp C."/>
            <person name="Kurdi O."/>
            <person name="Lashkari D."/>
            <person name="Lew H."/>
            <person name="Lin A."/>
            <person name="Lin D."/>
            <person name="Louis E.J."/>
            <person name="Marathe R."/>
            <person name="Messenguy F."/>
            <person name="Mewes H.-W."/>
            <person name="Mirtipati S."/>
            <person name="Moestl D."/>
            <person name="Mueller-Auer S."/>
            <person name="Namath A."/>
            <person name="Nentwich U."/>
            <person name="Oefner P."/>
            <person name="Pearson D."/>
            <person name="Petel F.X."/>
            <person name="Pohl T.M."/>
            <person name="Purnelle B."/>
            <person name="Rajandream M.A."/>
            <person name="Rechmann S."/>
            <person name="Rieger M."/>
            <person name="Riles L."/>
            <person name="Roberts D."/>
            <person name="Schaefer M."/>
            <person name="Scharfe M."/>
            <person name="Scherens B."/>
            <person name="Schramm S."/>
            <person name="Schroeder M."/>
            <person name="Sdicu A.-M."/>
            <person name="Tettelin H."/>
            <person name="Urrestarazu L.A."/>
            <person name="Ushinsky S."/>
            <person name="Vierendeels F."/>
            <person name="Vissers S."/>
            <person name="Voss H."/>
            <person name="Walsh S.V."/>
            <person name="Wambutt R."/>
            <person name="Wang Y."/>
            <person name="Wedler E."/>
            <person name="Wedler H."/>
            <person name="Winnett E."/>
            <person name="Zhong W.-W."/>
            <person name="Zollner A."/>
            <person name="Vo D.H."/>
            <person name="Hani J."/>
        </authorList>
    </citation>
    <scope>NUCLEOTIDE SEQUENCE [LARGE SCALE GENOMIC DNA]</scope>
    <source>
        <strain>ATCC 204508 / S288c</strain>
    </source>
</reference>
<reference key="2">
    <citation type="journal article" date="2014" name="G3 (Bethesda)">
        <title>The reference genome sequence of Saccharomyces cerevisiae: Then and now.</title>
        <authorList>
            <person name="Engel S.R."/>
            <person name="Dietrich F.S."/>
            <person name="Fisk D.G."/>
            <person name="Binkley G."/>
            <person name="Balakrishnan R."/>
            <person name="Costanzo M.C."/>
            <person name="Dwight S.S."/>
            <person name="Hitz B.C."/>
            <person name="Karra K."/>
            <person name="Nash R.S."/>
            <person name="Weng S."/>
            <person name="Wong E.D."/>
            <person name="Lloyd P."/>
            <person name="Skrzypek M.S."/>
            <person name="Miyasato S.R."/>
            <person name="Simison M."/>
            <person name="Cherry J.M."/>
        </authorList>
    </citation>
    <scope>GENOME REANNOTATION</scope>
    <source>
        <strain>ATCC 204508 / S288c</strain>
    </source>
</reference>
<reference key="3">
    <citation type="journal article" date="2003" name="Nature">
        <title>Global analysis of protein localization in budding yeast.</title>
        <authorList>
            <person name="Huh W.-K."/>
            <person name="Falvo J.V."/>
            <person name="Gerke L.C."/>
            <person name="Carroll A.S."/>
            <person name="Howson R.W."/>
            <person name="Weissman J.S."/>
            <person name="O'Shea E.K."/>
        </authorList>
    </citation>
    <scope>SUBCELLULAR LOCATION [LARGE SCALE ANALYSIS]</scope>
</reference>
<reference key="4">
    <citation type="journal article" date="2003" name="Nature">
        <title>Global analysis of protein expression in yeast.</title>
        <authorList>
            <person name="Ghaemmaghami S."/>
            <person name="Huh W.-K."/>
            <person name="Bower K."/>
            <person name="Howson R.W."/>
            <person name="Belle A."/>
            <person name="Dephoure N."/>
            <person name="O'Shea E.K."/>
            <person name="Weissman J.S."/>
        </authorList>
    </citation>
    <scope>LEVEL OF PROTEIN EXPRESSION [LARGE SCALE ANALYSIS]</scope>
</reference>
<accession>Q12160</accession>
<accession>D6W468</accession>